<name>PCHR_BACSU</name>
<protein>
    <recommendedName>
        <fullName evidence="4">HTH-type transcriptional regulator PchR</fullName>
    </recommendedName>
    <alternativeName>
        <fullName evidence="4">Pulcherriminic acid biosynthetis regulator</fullName>
    </alternativeName>
</protein>
<sequence>MSDLTKQMIYDIYVRLLHLNEQKANTSLQQFFKEAAEEDVAEIPKNMTSIHVIDCIGQHEPINNAGIARKMNLSKANVTKISTKLIKEEFINSYQLTDNKKEVYFKLTRKGRRIFDLHEKLHKKKELAFYQFLDSFSQEEQKAVLKFLEQLTSTLEAEQTDGTPDKPVK</sequence>
<dbReference type="EMBL" id="Z36881">
    <property type="protein sequence ID" value="CAA85355.1"/>
    <property type="molecule type" value="Genomic_DNA"/>
</dbReference>
<dbReference type="EMBL" id="AF017113">
    <property type="protein sequence ID" value="AAC67278.1"/>
    <property type="molecule type" value="Genomic_DNA"/>
</dbReference>
<dbReference type="EMBL" id="AL009126">
    <property type="protein sequence ID" value="CAB15513.1"/>
    <property type="molecule type" value="Genomic_DNA"/>
</dbReference>
<dbReference type="PIR" id="S47218">
    <property type="entry name" value="S47218"/>
</dbReference>
<dbReference type="RefSeq" id="NP_391388.1">
    <property type="nucleotide sequence ID" value="NC_000964.3"/>
</dbReference>
<dbReference type="RefSeq" id="WP_003228073.1">
    <property type="nucleotide sequence ID" value="NZ_OZ025638.1"/>
</dbReference>
<dbReference type="SMR" id="P40762"/>
<dbReference type="FunCoup" id="P40762">
    <property type="interactions" value="72"/>
</dbReference>
<dbReference type="IntAct" id="P40762">
    <property type="interactions" value="1"/>
</dbReference>
<dbReference type="STRING" id="224308.BSU35080"/>
<dbReference type="PaxDb" id="224308-BSU35080"/>
<dbReference type="EnsemblBacteria" id="CAB15513">
    <property type="protein sequence ID" value="CAB15513"/>
    <property type="gene ID" value="BSU_35080"/>
</dbReference>
<dbReference type="GeneID" id="936625"/>
<dbReference type="KEGG" id="bsu:BSU35080"/>
<dbReference type="PATRIC" id="fig|224308.179.peg.3798"/>
<dbReference type="eggNOG" id="COG1846">
    <property type="taxonomic scope" value="Bacteria"/>
</dbReference>
<dbReference type="InParanoid" id="P40762"/>
<dbReference type="OrthoDB" id="5358347at2"/>
<dbReference type="PhylomeDB" id="P40762"/>
<dbReference type="BioCyc" id="BSUB:BSU35080-MONOMER"/>
<dbReference type="Proteomes" id="UP000001570">
    <property type="component" value="Chromosome"/>
</dbReference>
<dbReference type="GO" id="GO:0003677">
    <property type="term" value="F:DNA binding"/>
    <property type="evidence" value="ECO:0007669"/>
    <property type="project" value="UniProtKB-KW"/>
</dbReference>
<dbReference type="GO" id="GO:0003700">
    <property type="term" value="F:DNA-binding transcription factor activity"/>
    <property type="evidence" value="ECO:0007669"/>
    <property type="project" value="InterPro"/>
</dbReference>
<dbReference type="GO" id="GO:0045892">
    <property type="term" value="P:negative regulation of DNA-templated transcription"/>
    <property type="evidence" value="ECO:0000315"/>
    <property type="project" value="CACAO"/>
</dbReference>
<dbReference type="GO" id="GO:0045893">
    <property type="term" value="P:positive regulation of DNA-templated transcription"/>
    <property type="evidence" value="ECO:0000315"/>
    <property type="project" value="CACAO"/>
</dbReference>
<dbReference type="Gene3D" id="1.10.10.10">
    <property type="entry name" value="Winged helix-like DNA-binding domain superfamily/Winged helix DNA-binding domain"/>
    <property type="match status" value="1"/>
</dbReference>
<dbReference type="InterPro" id="IPR000835">
    <property type="entry name" value="HTH_MarR-typ"/>
</dbReference>
<dbReference type="InterPro" id="IPR052067">
    <property type="entry name" value="Metal_resp_HTH_trans_reg"/>
</dbReference>
<dbReference type="InterPro" id="IPR023187">
    <property type="entry name" value="Tscrpt_reg_MarR-type_CS"/>
</dbReference>
<dbReference type="InterPro" id="IPR036388">
    <property type="entry name" value="WH-like_DNA-bd_sf"/>
</dbReference>
<dbReference type="InterPro" id="IPR036390">
    <property type="entry name" value="WH_DNA-bd_sf"/>
</dbReference>
<dbReference type="PANTHER" id="PTHR35790">
    <property type="entry name" value="HTH-TYPE TRANSCRIPTIONAL REGULATOR PCHR"/>
    <property type="match status" value="1"/>
</dbReference>
<dbReference type="PANTHER" id="PTHR35790:SF4">
    <property type="entry name" value="HTH-TYPE TRANSCRIPTIONAL REGULATOR PCHR"/>
    <property type="match status" value="1"/>
</dbReference>
<dbReference type="Pfam" id="PF01047">
    <property type="entry name" value="MarR"/>
    <property type="match status" value="1"/>
</dbReference>
<dbReference type="SMART" id="SM00347">
    <property type="entry name" value="HTH_MARR"/>
    <property type="match status" value="1"/>
</dbReference>
<dbReference type="SUPFAM" id="SSF46785">
    <property type="entry name" value="Winged helix' DNA-binding domain"/>
    <property type="match status" value="1"/>
</dbReference>
<dbReference type="PROSITE" id="PS01117">
    <property type="entry name" value="HTH_MARR_1"/>
    <property type="match status" value="1"/>
</dbReference>
<dbReference type="PROSITE" id="PS50995">
    <property type="entry name" value="HTH_MARR_2"/>
    <property type="match status" value="1"/>
</dbReference>
<comment type="function">
    <text evidence="2">Represses the expression of the yvmC-cypX operon, which is involved in pulcherriminic acid biosynthesis. Also negatively regulates yvmA, yvnB and its own expression. Positively regulates yisI expression. Acts by binding specifically to a 14-bp palindromic motif, the YvmB box, which is present in the promoter region of the target genes.</text>
</comment>
<comment type="subunit">
    <text evidence="2">Homodimer.</text>
</comment>
<comment type="developmental stage">
    <text evidence="2">Expression increases during entry into stationary phase.</text>
</comment>
<comment type="induction">
    <text evidence="2">Up-regulated in response to iron starvation. Negatively autoregulated. Also repressed by CcpA in stationary growth phase.</text>
</comment>
<comment type="disruption phenotype">
    <text evidence="2">Deletion of the gene induces changes of proteins involved in cellular processes depending on iron availability. In iron-rich medium, mutants overproduce a red pigment after entry into the stationary growth phase.</text>
</comment>
<keyword id="KW-0010">Activator</keyword>
<keyword id="KW-0238">DNA-binding</keyword>
<keyword id="KW-1185">Reference proteome</keyword>
<keyword id="KW-0678">Repressor</keyword>
<keyword id="KW-0804">Transcription</keyword>
<keyword id="KW-0805">Transcription regulation</keyword>
<accession>P40762</accession>
<feature type="chain" id="PRO_0000054403" description="HTH-type transcriptional regulator PchR">
    <location>
        <begin position="1"/>
        <end position="169"/>
    </location>
</feature>
<feature type="domain" description="HTH marR-type" evidence="1">
    <location>
        <begin position="10"/>
        <end position="153"/>
    </location>
</feature>
<feature type="DNA-binding region" description="H-T-H motif" evidence="1">
    <location>
        <begin position="64"/>
        <end position="87"/>
    </location>
</feature>
<evidence type="ECO:0000255" key="1">
    <source>
        <dbReference type="PROSITE-ProRule" id="PRU00345"/>
    </source>
</evidence>
<evidence type="ECO:0000269" key="2">
    <source>
    </source>
</evidence>
<evidence type="ECO:0000303" key="3">
    <source>
    </source>
</evidence>
<evidence type="ECO:0000305" key="4"/>
<reference key="1">
    <citation type="submission" date="1994-08" db="EMBL/GenBank/DDBJ databases">
        <title>Transposon Tn917 mutants of Bacillus subtilis involved in protein secretion.</title>
        <authorList>
            <person name="Walther T."/>
            <person name="Hofemeister J.W."/>
        </authorList>
    </citation>
    <scope>NUCLEOTIDE SEQUENCE [GENOMIC DNA]</scope>
    <source>
        <strain>168 / BD170</strain>
    </source>
</reference>
<reference key="2">
    <citation type="submission" date="1997-11" db="EMBL/GenBank/DDBJ databases">
        <title>Nucleotide sequence of the 300-304 chromosomal segment of Bacillus subtilis.</title>
        <authorList>
            <person name="Lazarevic V."/>
            <person name="Soldo B."/>
            <person name="Rivolta C."/>
            <person name="Reynolds S."/>
            <person name="Mauel C."/>
            <person name="Karamata D."/>
        </authorList>
    </citation>
    <scope>NUCLEOTIDE SEQUENCE [GENOMIC DNA]</scope>
</reference>
<reference key="3">
    <citation type="journal article" date="1997" name="Nature">
        <title>The complete genome sequence of the Gram-positive bacterium Bacillus subtilis.</title>
        <authorList>
            <person name="Kunst F."/>
            <person name="Ogasawara N."/>
            <person name="Moszer I."/>
            <person name="Albertini A.M."/>
            <person name="Alloni G."/>
            <person name="Azevedo V."/>
            <person name="Bertero M.G."/>
            <person name="Bessieres P."/>
            <person name="Bolotin A."/>
            <person name="Borchert S."/>
            <person name="Borriss R."/>
            <person name="Boursier L."/>
            <person name="Brans A."/>
            <person name="Braun M."/>
            <person name="Brignell S.C."/>
            <person name="Bron S."/>
            <person name="Brouillet S."/>
            <person name="Bruschi C.V."/>
            <person name="Caldwell B."/>
            <person name="Capuano V."/>
            <person name="Carter N.M."/>
            <person name="Choi S.-K."/>
            <person name="Codani J.-J."/>
            <person name="Connerton I.F."/>
            <person name="Cummings N.J."/>
            <person name="Daniel R.A."/>
            <person name="Denizot F."/>
            <person name="Devine K.M."/>
            <person name="Duesterhoeft A."/>
            <person name="Ehrlich S.D."/>
            <person name="Emmerson P.T."/>
            <person name="Entian K.-D."/>
            <person name="Errington J."/>
            <person name="Fabret C."/>
            <person name="Ferrari E."/>
            <person name="Foulger D."/>
            <person name="Fritz C."/>
            <person name="Fujita M."/>
            <person name="Fujita Y."/>
            <person name="Fuma S."/>
            <person name="Galizzi A."/>
            <person name="Galleron N."/>
            <person name="Ghim S.-Y."/>
            <person name="Glaser P."/>
            <person name="Goffeau A."/>
            <person name="Golightly E.J."/>
            <person name="Grandi G."/>
            <person name="Guiseppi G."/>
            <person name="Guy B.J."/>
            <person name="Haga K."/>
            <person name="Haiech J."/>
            <person name="Harwood C.R."/>
            <person name="Henaut A."/>
            <person name="Hilbert H."/>
            <person name="Holsappel S."/>
            <person name="Hosono S."/>
            <person name="Hullo M.-F."/>
            <person name="Itaya M."/>
            <person name="Jones L.-M."/>
            <person name="Joris B."/>
            <person name="Karamata D."/>
            <person name="Kasahara Y."/>
            <person name="Klaerr-Blanchard M."/>
            <person name="Klein C."/>
            <person name="Kobayashi Y."/>
            <person name="Koetter P."/>
            <person name="Koningstein G."/>
            <person name="Krogh S."/>
            <person name="Kumano M."/>
            <person name="Kurita K."/>
            <person name="Lapidus A."/>
            <person name="Lardinois S."/>
            <person name="Lauber J."/>
            <person name="Lazarevic V."/>
            <person name="Lee S.-M."/>
            <person name="Levine A."/>
            <person name="Liu H."/>
            <person name="Masuda S."/>
            <person name="Mauel C."/>
            <person name="Medigue C."/>
            <person name="Medina N."/>
            <person name="Mellado R.P."/>
            <person name="Mizuno M."/>
            <person name="Moestl D."/>
            <person name="Nakai S."/>
            <person name="Noback M."/>
            <person name="Noone D."/>
            <person name="O'Reilly M."/>
            <person name="Ogawa K."/>
            <person name="Ogiwara A."/>
            <person name="Oudega B."/>
            <person name="Park S.-H."/>
            <person name="Parro V."/>
            <person name="Pohl T.M."/>
            <person name="Portetelle D."/>
            <person name="Porwollik S."/>
            <person name="Prescott A.M."/>
            <person name="Presecan E."/>
            <person name="Pujic P."/>
            <person name="Purnelle B."/>
            <person name="Rapoport G."/>
            <person name="Rey M."/>
            <person name="Reynolds S."/>
            <person name="Rieger M."/>
            <person name="Rivolta C."/>
            <person name="Rocha E."/>
            <person name="Roche B."/>
            <person name="Rose M."/>
            <person name="Sadaie Y."/>
            <person name="Sato T."/>
            <person name="Scanlan E."/>
            <person name="Schleich S."/>
            <person name="Schroeter R."/>
            <person name="Scoffone F."/>
            <person name="Sekiguchi J."/>
            <person name="Sekowska A."/>
            <person name="Seror S.J."/>
            <person name="Serror P."/>
            <person name="Shin B.-S."/>
            <person name="Soldo B."/>
            <person name="Sorokin A."/>
            <person name="Tacconi E."/>
            <person name="Takagi T."/>
            <person name="Takahashi H."/>
            <person name="Takemaru K."/>
            <person name="Takeuchi M."/>
            <person name="Tamakoshi A."/>
            <person name="Tanaka T."/>
            <person name="Terpstra P."/>
            <person name="Tognoni A."/>
            <person name="Tosato V."/>
            <person name="Uchiyama S."/>
            <person name="Vandenbol M."/>
            <person name="Vannier F."/>
            <person name="Vassarotti A."/>
            <person name="Viari A."/>
            <person name="Wambutt R."/>
            <person name="Wedler E."/>
            <person name="Wedler H."/>
            <person name="Weitzenegger T."/>
            <person name="Winters P."/>
            <person name="Wipat A."/>
            <person name="Yamamoto H."/>
            <person name="Yamane K."/>
            <person name="Yasumoto K."/>
            <person name="Yata K."/>
            <person name="Yoshida K."/>
            <person name="Yoshikawa H.-F."/>
            <person name="Zumstein E."/>
            <person name="Yoshikawa H."/>
            <person name="Danchin A."/>
        </authorList>
    </citation>
    <scope>NUCLEOTIDE SEQUENCE [LARGE SCALE GENOMIC DNA]</scope>
    <source>
        <strain>168</strain>
    </source>
</reference>
<reference key="4">
    <citation type="journal article" date="2016" name="BMC Microbiol.">
        <title>The MarR-like protein PchR (YvmB) regulates expression of genes involved in pulcherriminic acid biosynthesis and in the initiation of sporulation in Bacillus subtilis.</title>
        <authorList>
            <person name="Randazzo P."/>
            <person name="Aubert-Frambourg A."/>
            <person name="Guillot A."/>
            <person name="Auger S."/>
        </authorList>
    </citation>
    <scope>FUNCTION</scope>
    <scope>DNA-BINDING</scope>
    <scope>SUBUNIT</scope>
    <scope>DEVELOPMENTAL STAGE</scope>
    <scope>INDUCTION</scope>
    <scope>DISRUPTION PHENOTYPE</scope>
</reference>
<gene>
    <name evidence="3" type="primary">pchR</name>
    <name type="synonym">yvmB</name>
    <name type="synonym">yzhA</name>
    <name type="ordered locus">BSU35080</name>
</gene>
<organism>
    <name type="scientific">Bacillus subtilis (strain 168)</name>
    <dbReference type="NCBI Taxonomy" id="224308"/>
    <lineage>
        <taxon>Bacteria</taxon>
        <taxon>Bacillati</taxon>
        <taxon>Bacillota</taxon>
        <taxon>Bacilli</taxon>
        <taxon>Bacillales</taxon>
        <taxon>Bacillaceae</taxon>
        <taxon>Bacillus</taxon>
    </lineage>
</organism>
<proteinExistence type="evidence at protein level"/>